<reference key="1">
    <citation type="submission" date="2007-02" db="EMBL/GenBank/DDBJ databases">
        <title>Complete sequence of Clostridium thermocellum ATCC 27405.</title>
        <authorList>
            <consortium name="US DOE Joint Genome Institute"/>
            <person name="Copeland A."/>
            <person name="Lucas S."/>
            <person name="Lapidus A."/>
            <person name="Barry K."/>
            <person name="Detter J.C."/>
            <person name="Glavina del Rio T."/>
            <person name="Hammon N."/>
            <person name="Israni S."/>
            <person name="Dalin E."/>
            <person name="Tice H."/>
            <person name="Pitluck S."/>
            <person name="Chertkov O."/>
            <person name="Brettin T."/>
            <person name="Bruce D."/>
            <person name="Han C."/>
            <person name="Tapia R."/>
            <person name="Gilna P."/>
            <person name="Schmutz J."/>
            <person name="Larimer F."/>
            <person name="Land M."/>
            <person name="Hauser L."/>
            <person name="Kyrpides N."/>
            <person name="Mikhailova N."/>
            <person name="Wu J.H.D."/>
            <person name="Newcomb M."/>
            <person name="Richardson P."/>
        </authorList>
    </citation>
    <scope>NUCLEOTIDE SEQUENCE [LARGE SCALE GENOMIC DNA]</scope>
    <source>
        <strain>ATCC 27405 / DSM 1237 / JCM 9322 / NBRC 103400 / NCIMB 10682 / NRRL B-4536 / VPI 7372</strain>
    </source>
</reference>
<proteinExistence type="inferred from homology"/>
<name>DER_ACET2</name>
<protein>
    <recommendedName>
        <fullName evidence="1">GTPase Der</fullName>
    </recommendedName>
    <alternativeName>
        <fullName evidence="1">GTP-binding protein EngA</fullName>
    </alternativeName>
</protein>
<dbReference type="EMBL" id="CP000568">
    <property type="protein sequence ID" value="ABN52256.1"/>
    <property type="molecule type" value="Genomic_DNA"/>
</dbReference>
<dbReference type="RefSeq" id="WP_003515602.1">
    <property type="nucleotide sequence ID" value="NC_009012.1"/>
</dbReference>
<dbReference type="SMR" id="A3DE77"/>
<dbReference type="STRING" id="203119.Cthe_1024"/>
<dbReference type="GeneID" id="35805514"/>
<dbReference type="KEGG" id="cth:Cthe_1024"/>
<dbReference type="eggNOG" id="COG1160">
    <property type="taxonomic scope" value="Bacteria"/>
</dbReference>
<dbReference type="HOGENOM" id="CLU_016077_6_2_9"/>
<dbReference type="OrthoDB" id="9805918at2"/>
<dbReference type="Proteomes" id="UP000002145">
    <property type="component" value="Chromosome"/>
</dbReference>
<dbReference type="GO" id="GO:0005525">
    <property type="term" value="F:GTP binding"/>
    <property type="evidence" value="ECO:0007669"/>
    <property type="project" value="UniProtKB-UniRule"/>
</dbReference>
<dbReference type="GO" id="GO:0043022">
    <property type="term" value="F:ribosome binding"/>
    <property type="evidence" value="ECO:0007669"/>
    <property type="project" value="TreeGrafter"/>
</dbReference>
<dbReference type="GO" id="GO:0042254">
    <property type="term" value="P:ribosome biogenesis"/>
    <property type="evidence" value="ECO:0007669"/>
    <property type="project" value="UniProtKB-KW"/>
</dbReference>
<dbReference type="CDD" id="cd01894">
    <property type="entry name" value="EngA1"/>
    <property type="match status" value="1"/>
</dbReference>
<dbReference type="CDD" id="cd01895">
    <property type="entry name" value="EngA2"/>
    <property type="match status" value="1"/>
</dbReference>
<dbReference type="FunFam" id="3.30.300.20:FF:000004">
    <property type="entry name" value="GTPase Der"/>
    <property type="match status" value="1"/>
</dbReference>
<dbReference type="FunFam" id="3.40.50.300:FF:000040">
    <property type="entry name" value="GTPase Der"/>
    <property type="match status" value="1"/>
</dbReference>
<dbReference type="FunFam" id="3.40.50.300:FF:000057">
    <property type="entry name" value="GTPase Der"/>
    <property type="match status" value="1"/>
</dbReference>
<dbReference type="Gene3D" id="3.30.300.20">
    <property type="match status" value="1"/>
</dbReference>
<dbReference type="Gene3D" id="3.40.50.300">
    <property type="entry name" value="P-loop containing nucleotide triphosphate hydrolases"/>
    <property type="match status" value="2"/>
</dbReference>
<dbReference type="HAMAP" id="MF_00195">
    <property type="entry name" value="GTPase_Der"/>
    <property type="match status" value="1"/>
</dbReference>
<dbReference type="InterPro" id="IPR031166">
    <property type="entry name" value="G_ENGA"/>
</dbReference>
<dbReference type="InterPro" id="IPR006073">
    <property type="entry name" value="GTP-bd"/>
</dbReference>
<dbReference type="InterPro" id="IPR016484">
    <property type="entry name" value="GTPase_Der"/>
</dbReference>
<dbReference type="InterPro" id="IPR032859">
    <property type="entry name" value="KH_dom-like"/>
</dbReference>
<dbReference type="InterPro" id="IPR015946">
    <property type="entry name" value="KH_dom-like_a/b"/>
</dbReference>
<dbReference type="InterPro" id="IPR027417">
    <property type="entry name" value="P-loop_NTPase"/>
</dbReference>
<dbReference type="InterPro" id="IPR005225">
    <property type="entry name" value="Small_GTP-bd"/>
</dbReference>
<dbReference type="NCBIfam" id="TIGR03594">
    <property type="entry name" value="GTPase_EngA"/>
    <property type="match status" value="1"/>
</dbReference>
<dbReference type="NCBIfam" id="TIGR00231">
    <property type="entry name" value="small_GTP"/>
    <property type="match status" value="2"/>
</dbReference>
<dbReference type="PANTHER" id="PTHR43834">
    <property type="entry name" value="GTPASE DER"/>
    <property type="match status" value="1"/>
</dbReference>
<dbReference type="PANTHER" id="PTHR43834:SF6">
    <property type="entry name" value="GTPASE DER"/>
    <property type="match status" value="1"/>
</dbReference>
<dbReference type="Pfam" id="PF14714">
    <property type="entry name" value="KH_dom-like"/>
    <property type="match status" value="1"/>
</dbReference>
<dbReference type="Pfam" id="PF01926">
    <property type="entry name" value="MMR_HSR1"/>
    <property type="match status" value="2"/>
</dbReference>
<dbReference type="PIRSF" id="PIRSF006485">
    <property type="entry name" value="GTP-binding_EngA"/>
    <property type="match status" value="1"/>
</dbReference>
<dbReference type="PRINTS" id="PR00326">
    <property type="entry name" value="GTP1OBG"/>
</dbReference>
<dbReference type="SUPFAM" id="SSF52540">
    <property type="entry name" value="P-loop containing nucleoside triphosphate hydrolases"/>
    <property type="match status" value="2"/>
</dbReference>
<dbReference type="PROSITE" id="PS51712">
    <property type="entry name" value="G_ENGA"/>
    <property type="match status" value="2"/>
</dbReference>
<evidence type="ECO:0000255" key="1">
    <source>
        <dbReference type="HAMAP-Rule" id="MF_00195"/>
    </source>
</evidence>
<gene>
    <name evidence="1" type="primary">der</name>
    <name type="synonym">engA</name>
    <name type="ordered locus">Cthe_1024</name>
</gene>
<accession>A3DE77</accession>
<comment type="function">
    <text evidence="1">GTPase that plays an essential role in the late steps of ribosome biogenesis.</text>
</comment>
<comment type="subunit">
    <text evidence="1">Associates with the 50S ribosomal subunit.</text>
</comment>
<comment type="similarity">
    <text evidence="1">Belongs to the TRAFAC class TrmE-Era-EngA-EngB-Septin-like GTPase superfamily. EngA (Der) GTPase family.</text>
</comment>
<organism>
    <name type="scientific">Acetivibrio thermocellus (strain ATCC 27405 / DSM 1237 / JCM 9322 / NBRC 103400 / NCIMB 10682 / NRRL B-4536 / VPI 7372)</name>
    <name type="common">Clostridium thermocellum</name>
    <dbReference type="NCBI Taxonomy" id="203119"/>
    <lineage>
        <taxon>Bacteria</taxon>
        <taxon>Bacillati</taxon>
        <taxon>Bacillota</taxon>
        <taxon>Clostridia</taxon>
        <taxon>Eubacteriales</taxon>
        <taxon>Oscillospiraceae</taxon>
        <taxon>Acetivibrio</taxon>
    </lineage>
</organism>
<keyword id="KW-0342">GTP-binding</keyword>
<keyword id="KW-0547">Nucleotide-binding</keyword>
<keyword id="KW-1185">Reference proteome</keyword>
<keyword id="KW-0677">Repeat</keyword>
<keyword id="KW-0690">Ribosome biogenesis</keyword>
<sequence>MPKPVVAVVGRPNVGKSTFFNYLVGKRISIVEDTPGVTRDRIYAEVEWRNKKFTLIDTGGIEPYSEDKIMQQMKRQAEIAIETADIIIFMVDVKDGVTASDKEVATLLRKTKKPVIVAVNKVDKIGELPADFYEFYNLGFGELMAISSIHGLGMGDLLDEIFKYFPEEDAEDYDEDVIKVAVVGKPNVGKSSLINRILGEERVIVSDIPGTTRDAIDTFVENEHGKFVFIDTAGIRRQSKINEKIEKYSIIRSWTAIERADVCLILIDAKEGVTEQDTKIAGYAHEQGKASIIVVNKWDLIEKQTGTLEEYRRTVHEKLGFMLYAPVIFISALTGQRVDRIYGLIKHVADQAAMRISTGVLNDLLNEATAMVQPPSDKGKRLKIYYMTQSSVKPPSFVLFINNMELMHYSYERYLENQLRKSFGFEGTPIKFILREKEKE</sequence>
<feature type="chain" id="PRO_1000011611" description="GTPase Der">
    <location>
        <begin position="1"/>
        <end position="440"/>
    </location>
</feature>
<feature type="domain" description="EngA-type G 1">
    <location>
        <begin position="4"/>
        <end position="169"/>
    </location>
</feature>
<feature type="domain" description="EngA-type G 2">
    <location>
        <begin position="178"/>
        <end position="353"/>
    </location>
</feature>
<feature type="domain" description="KH-like" evidence="1">
    <location>
        <begin position="354"/>
        <end position="438"/>
    </location>
</feature>
<feature type="binding site" evidence="1">
    <location>
        <begin position="10"/>
        <end position="17"/>
    </location>
    <ligand>
        <name>GTP</name>
        <dbReference type="ChEBI" id="CHEBI:37565"/>
        <label>1</label>
    </ligand>
</feature>
<feature type="binding site" evidence="1">
    <location>
        <begin position="57"/>
        <end position="61"/>
    </location>
    <ligand>
        <name>GTP</name>
        <dbReference type="ChEBI" id="CHEBI:37565"/>
        <label>1</label>
    </ligand>
</feature>
<feature type="binding site" evidence="1">
    <location>
        <begin position="120"/>
        <end position="123"/>
    </location>
    <ligand>
        <name>GTP</name>
        <dbReference type="ChEBI" id="CHEBI:37565"/>
        <label>1</label>
    </ligand>
</feature>
<feature type="binding site" evidence="1">
    <location>
        <begin position="184"/>
        <end position="191"/>
    </location>
    <ligand>
        <name>GTP</name>
        <dbReference type="ChEBI" id="CHEBI:37565"/>
        <label>2</label>
    </ligand>
</feature>
<feature type="binding site" evidence="1">
    <location>
        <begin position="231"/>
        <end position="235"/>
    </location>
    <ligand>
        <name>GTP</name>
        <dbReference type="ChEBI" id="CHEBI:37565"/>
        <label>2</label>
    </ligand>
</feature>
<feature type="binding site" evidence="1">
    <location>
        <begin position="296"/>
        <end position="299"/>
    </location>
    <ligand>
        <name>GTP</name>
        <dbReference type="ChEBI" id="CHEBI:37565"/>
        <label>2</label>
    </ligand>
</feature>